<sequence>MLLACGLGVALGGGYELLLHSSFIIGNQELNAGLVELGVGLISGWGGVTEMFA</sequence>
<protein>
    <recommendedName>
        <fullName>Putative uncharacterized protein RC0837</fullName>
    </recommendedName>
</protein>
<comment type="caution">
    <text evidence="1">Could be the product of a pseudogene. It corresponds to positions 534 to 586 of the complete orthologous and probably active protein in R.felis (RF_0890).</text>
</comment>
<organism>
    <name type="scientific">Rickettsia conorii (strain ATCC VR-613 / Malish 7)</name>
    <dbReference type="NCBI Taxonomy" id="272944"/>
    <lineage>
        <taxon>Bacteria</taxon>
        <taxon>Pseudomonadati</taxon>
        <taxon>Pseudomonadota</taxon>
        <taxon>Alphaproteobacteria</taxon>
        <taxon>Rickettsiales</taxon>
        <taxon>Rickettsiaceae</taxon>
        <taxon>Rickettsieae</taxon>
        <taxon>Rickettsia</taxon>
        <taxon>spotted fever group</taxon>
    </lineage>
</organism>
<feature type="chain" id="PRO_0000284429" description="Putative uncharacterized protein RC0837">
    <location>
        <begin position="1"/>
        <end position="53"/>
    </location>
</feature>
<name>Y837_RICCN</name>
<accession>Q92HD4</accession>
<gene>
    <name type="ordered locus">RC0837</name>
</gene>
<evidence type="ECO:0000305" key="1"/>
<proteinExistence type="uncertain"/>
<reference key="1">
    <citation type="journal article" date="2001" name="Science">
        <title>Mechanisms of evolution in Rickettsia conorii and R. prowazekii.</title>
        <authorList>
            <person name="Ogata H."/>
            <person name="Audic S."/>
            <person name="Renesto-Audiffren P."/>
            <person name="Fournier P.-E."/>
            <person name="Barbe V."/>
            <person name="Samson D."/>
            <person name="Roux V."/>
            <person name="Cossart P."/>
            <person name="Weissenbach J."/>
            <person name="Claverie J.-M."/>
            <person name="Raoult D."/>
        </authorList>
    </citation>
    <scope>NUCLEOTIDE SEQUENCE [LARGE SCALE GENOMIC DNA]</scope>
    <source>
        <strain>ATCC VR-613 / Malish 7</strain>
    </source>
</reference>
<dbReference type="EMBL" id="AE006914">
    <property type="protein sequence ID" value="AAL03375.1"/>
    <property type="molecule type" value="Genomic_DNA"/>
</dbReference>
<dbReference type="PIR" id="E97804">
    <property type="entry name" value="E97804"/>
</dbReference>
<dbReference type="RefSeq" id="WP_010977444.1">
    <property type="nucleotide sequence ID" value="NC_003103.1"/>
</dbReference>
<dbReference type="SMR" id="Q92HD4"/>
<dbReference type="GeneID" id="42101445"/>
<dbReference type="KEGG" id="rco:RC0837"/>
<dbReference type="HOGENOM" id="CLU_3065716_0_0_5"/>
<dbReference type="Proteomes" id="UP000000816">
    <property type="component" value="Chromosome"/>
</dbReference>
<dbReference type="Gene3D" id="3.90.226.20">
    <property type="match status" value="1"/>
</dbReference>
<dbReference type="InterPro" id="IPR029045">
    <property type="entry name" value="ClpP/crotonase-like_dom_sf"/>
</dbReference>
<dbReference type="SUPFAM" id="SSF52096">
    <property type="entry name" value="ClpP/crotonase"/>
    <property type="match status" value="1"/>
</dbReference>